<proteinExistence type="inferred from homology"/>
<keyword id="KW-0378">Hydrolase</keyword>
<keyword id="KW-0479">Metal-binding</keyword>
<keyword id="KW-0862">Zinc</keyword>
<dbReference type="EC" id="3.5.1.15" evidence="1"/>
<dbReference type="EMBL" id="CP000110">
    <property type="protein sequence ID" value="ABB34291.1"/>
    <property type="molecule type" value="Genomic_DNA"/>
</dbReference>
<dbReference type="RefSeq" id="WP_011363523.1">
    <property type="nucleotide sequence ID" value="NC_007516.1"/>
</dbReference>
<dbReference type="SMR" id="Q3AM91"/>
<dbReference type="STRING" id="110662.Syncc9605_0517"/>
<dbReference type="KEGG" id="syd:Syncc9605_0517"/>
<dbReference type="eggNOG" id="COG2988">
    <property type="taxonomic scope" value="Bacteria"/>
</dbReference>
<dbReference type="HOGENOM" id="CLU_083292_0_0_3"/>
<dbReference type="OrthoDB" id="531770at2"/>
<dbReference type="GO" id="GO:0005829">
    <property type="term" value="C:cytosol"/>
    <property type="evidence" value="ECO:0007669"/>
    <property type="project" value="TreeGrafter"/>
</dbReference>
<dbReference type="GO" id="GO:0019807">
    <property type="term" value="F:aspartoacylase activity"/>
    <property type="evidence" value="ECO:0007669"/>
    <property type="project" value="UniProtKB-UniRule"/>
</dbReference>
<dbReference type="GO" id="GO:0016788">
    <property type="term" value="F:hydrolase activity, acting on ester bonds"/>
    <property type="evidence" value="ECO:0007669"/>
    <property type="project" value="InterPro"/>
</dbReference>
<dbReference type="GO" id="GO:0008270">
    <property type="term" value="F:zinc ion binding"/>
    <property type="evidence" value="ECO:0007669"/>
    <property type="project" value="UniProtKB-UniRule"/>
</dbReference>
<dbReference type="CDD" id="cd06909">
    <property type="entry name" value="M14_ASPA"/>
    <property type="match status" value="1"/>
</dbReference>
<dbReference type="Gene3D" id="2.20.25.160">
    <property type="match status" value="1"/>
</dbReference>
<dbReference type="Gene3D" id="3.40.630.10">
    <property type="entry name" value="Zn peptidases"/>
    <property type="match status" value="1"/>
</dbReference>
<dbReference type="HAMAP" id="MF_00704">
    <property type="entry name" value="Aspartoacylase"/>
    <property type="match status" value="1"/>
</dbReference>
<dbReference type="InterPro" id="IPR050178">
    <property type="entry name" value="AspA/AstE_fam"/>
</dbReference>
<dbReference type="InterPro" id="IPR016708">
    <property type="entry name" value="Aspartoacylase"/>
</dbReference>
<dbReference type="InterPro" id="IPR055438">
    <property type="entry name" value="AstE_AspA_cat"/>
</dbReference>
<dbReference type="InterPro" id="IPR007036">
    <property type="entry name" value="Aste_AspA_hybrid_dom"/>
</dbReference>
<dbReference type="NCBIfam" id="NF002601">
    <property type="entry name" value="PRK02259.1"/>
    <property type="match status" value="1"/>
</dbReference>
<dbReference type="PANTHER" id="PTHR15162">
    <property type="entry name" value="ASPARTOACYLASE"/>
    <property type="match status" value="1"/>
</dbReference>
<dbReference type="PANTHER" id="PTHR15162:SF7">
    <property type="entry name" value="SUCCINYLGLUTAMATE DESUCCINYLASE"/>
    <property type="match status" value="1"/>
</dbReference>
<dbReference type="Pfam" id="PF24827">
    <property type="entry name" value="AstE_AspA_cat"/>
    <property type="match status" value="1"/>
</dbReference>
<dbReference type="Pfam" id="PF04952">
    <property type="entry name" value="AstE_AspA_hybrid"/>
    <property type="match status" value="1"/>
</dbReference>
<dbReference type="PIRSF" id="PIRSF018001">
    <property type="entry name" value="Aspartoacylase"/>
    <property type="match status" value="1"/>
</dbReference>
<dbReference type="SUPFAM" id="SSF53187">
    <property type="entry name" value="Zn-dependent exopeptidases"/>
    <property type="match status" value="1"/>
</dbReference>
<sequence length="304" mass="33021">MSSCGVLVVAGTHGNEVNAPWLLQQWQANPDLIDAAGLAVQKVIGNPEALRRRCRYVDRDLNRCFLPEQLEQGASGLEFQRAGELLRLHGPSGEQPCAVAIDLHSTTAAMGNSLVVYGRRPADLALAALVQGALGLPIYLHEADAQQTGFLVESWPCGLVIEVGPVPQGLLNAGVVEQTRLGLESCLRALYQVRQELARLPDALVVHRHLGSRDLPKAENGEPQALVHPELQGRDWQNIASTQAMFRAADGTDRCEAWVGGEIPVFVNEAAYAEKSIAFSLTRREVWPVEPNWLLALKQLLAAA</sequence>
<name>ASPA_SYNSC</name>
<gene>
    <name type="ordered locus">Syncc9605_0517</name>
</gene>
<reference key="1">
    <citation type="submission" date="2005-07" db="EMBL/GenBank/DDBJ databases">
        <title>Complete sequence of Synechococcus sp. CC9605.</title>
        <authorList>
            <consortium name="US DOE Joint Genome Institute"/>
            <person name="Copeland A."/>
            <person name="Lucas S."/>
            <person name="Lapidus A."/>
            <person name="Barry K."/>
            <person name="Detter J.C."/>
            <person name="Glavina T."/>
            <person name="Hammon N."/>
            <person name="Israni S."/>
            <person name="Pitluck S."/>
            <person name="Schmutz J."/>
            <person name="Martinez M."/>
            <person name="Larimer F."/>
            <person name="Land M."/>
            <person name="Kyrpides N."/>
            <person name="Ivanova N."/>
            <person name="Richardson P."/>
        </authorList>
    </citation>
    <scope>NUCLEOTIDE SEQUENCE [LARGE SCALE GENOMIC DNA]</scope>
    <source>
        <strain>CC9605</strain>
    </source>
</reference>
<feature type="chain" id="PRO_1000147943" description="Probable aspartoacylase">
    <location>
        <begin position="1"/>
        <end position="304"/>
    </location>
</feature>
<feature type="binding site" evidence="1">
    <location>
        <position position="13"/>
    </location>
    <ligand>
        <name>Zn(2+)</name>
        <dbReference type="ChEBI" id="CHEBI:29105"/>
    </ligand>
</feature>
<feature type="binding site" evidence="1">
    <location>
        <position position="16"/>
    </location>
    <ligand>
        <name>Zn(2+)</name>
        <dbReference type="ChEBI" id="CHEBI:29105"/>
    </ligand>
</feature>
<feature type="binding site" evidence="1">
    <location>
        <position position="55"/>
    </location>
    <ligand>
        <name>substrate</name>
    </ligand>
</feature>
<feature type="binding site" evidence="1">
    <location>
        <begin position="62"/>
        <end position="63"/>
    </location>
    <ligand>
        <name>substrate</name>
    </ligand>
</feature>
<feature type="binding site" evidence="1">
    <location>
        <position position="104"/>
    </location>
    <ligand>
        <name>Zn(2+)</name>
        <dbReference type="ChEBI" id="CHEBI:29105"/>
    </ligand>
</feature>
<feature type="binding site" evidence="1">
    <location>
        <position position="162"/>
    </location>
    <ligand>
        <name>substrate</name>
    </ligand>
</feature>
<feature type="binding site" evidence="1">
    <location>
        <position position="272"/>
    </location>
    <ligand>
        <name>substrate</name>
    </ligand>
</feature>
<accession>Q3AM91</accession>
<evidence type="ECO:0000255" key="1">
    <source>
        <dbReference type="HAMAP-Rule" id="MF_00704"/>
    </source>
</evidence>
<comment type="catalytic activity">
    <reaction evidence="1">
        <text>an N-acyl-L-aspartate + H2O = a carboxylate + L-aspartate</text>
        <dbReference type="Rhea" id="RHEA:10872"/>
        <dbReference type="ChEBI" id="CHEBI:15377"/>
        <dbReference type="ChEBI" id="CHEBI:29067"/>
        <dbReference type="ChEBI" id="CHEBI:29991"/>
        <dbReference type="ChEBI" id="CHEBI:58497"/>
        <dbReference type="EC" id="3.5.1.15"/>
    </reaction>
</comment>
<comment type="cofactor">
    <cofactor evidence="1">
        <name>Zn(2+)</name>
        <dbReference type="ChEBI" id="CHEBI:29105"/>
    </cofactor>
    <text evidence="1">Binds 1 zinc ion per subunit.</text>
</comment>
<comment type="similarity">
    <text evidence="1">Belongs to the AspA/AstE family. Aspartoacylase subfamily.</text>
</comment>
<protein>
    <recommendedName>
        <fullName evidence="1">Probable aspartoacylase</fullName>
        <ecNumber evidence="1">3.5.1.15</ecNumber>
    </recommendedName>
</protein>
<organism>
    <name type="scientific">Synechococcus sp. (strain CC9605)</name>
    <dbReference type="NCBI Taxonomy" id="110662"/>
    <lineage>
        <taxon>Bacteria</taxon>
        <taxon>Bacillati</taxon>
        <taxon>Cyanobacteriota</taxon>
        <taxon>Cyanophyceae</taxon>
        <taxon>Synechococcales</taxon>
        <taxon>Synechococcaceae</taxon>
        <taxon>Synechococcus</taxon>
    </lineage>
</organism>